<feature type="initiator methionine" description="Removed" evidence="1">
    <location>
        <position position="1"/>
    </location>
</feature>
<feature type="chain" id="PRO_0000138073" description="Glycerol-3-phosphate dehydrogenase [NAD(+)], cytoplasmic">
    <location>
        <begin position="2"/>
        <end position="350"/>
    </location>
</feature>
<feature type="active site" description="Proton acceptor" evidence="1">
    <location>
        <position position="206"/>
    </location>
</feature>
<feature type="binding site" evidence="1">
    <location>
        <begin position="11"/>
        <end position="16"/>
    </location>
    <ligand>
        <name>NAD(+)</name>
        <dbReference type="ChEBI" id="CHEBI:57540"/>
    </ligand>
</feature>
<feature type="binding site" evidence="1">
    <location>
        <position position="98"/>
    </location>
    <ligand>
        <name>NAD(+)</name>
        <dbReference type="ChEBI" id="CHEBI:57540"/>
    </ligand>
</feature>
<feature type="binding site" evidence="1">
    <location>
        <position position="121"/>
    </location>
    <ligand>
        <name>NAD(+)</name>
        <dbReference type="ChEBI" id="CHEBI:57540"/>
    </ligand>
</feature>
<feature type="binding site" evidence="1">
    <location>
        <position position="121"/>
    </location>
    <ligand>
        <name>substrate</name>
    </ligand>
</feature>
<feature type="binding site" evidence="1">
    <location>
        <position position="155"/>
    </location>
    <ligand>
        <name>NAD(+)</name>
        <dbReference type="ChEBI" id="CHEBI:57540"/>
    </ligand>
</feature>
<feature type="binding site" evidence="1">
    <location>
        <begin position="270"/>
        <end position="271"/>
    </location>
    <ligand>
        <name>substrate</name>
    </ligand>
</feature>
<feature type="binding site" evidence="1">
    <location>
        <position position="270"/>
    </location>
    <ligand>
        <name>NAD(+)</name>
        <dbReference type="ChEBI" id="CHEBI:57540"/>
    </ligand>
</feature>
<feature type="binding site" evidence="1">
    <location>
        <position position="299"/>
    </location>
    <ligand>
        <name>NAD(+)</name>
        <dbReference type="ChEBI" id="CHEBI:57540"/>
    </ligand>
</feature>
<keyword id="KW-0963">Cytoplasm</keyword>
<keyword id="KW-0520">NAD</keyword>
<keyword id="KW-0560">Oxidoreductase</keyword>
<sequence>MAEKVNVCIVGSGNWGSAIAKIVGANASALPEFEERVTMFVYEEMIDGKKLTEIINETHENVKYLKGHKLPTNVVAVPDLVEAAKNADILIFVVPHQFIPNFCKQLLGKIKPNAIAISLIKGFDKAEGGGIDLISHIITRHLKIPCAVLMGANLANEVAEGNFCETTIGCTDKKYGKVLRDLFQANHFRVVVVEDADAVEVCGALKNIVACGAGFVDGLKLGDNTKAAVIRLGLMEMIRFVDVFYPGSKLSTFFESCGVADLITTCYGGRNRRVSEAFVTSGKTIEELEKEMLNGQKLQGPPTAEEVNYMLKNKGLEDKFPLFTAIHKICTNQLKPKDLIDCIRNHPEHM</sequence>
<gene>
    <name type="primary">Gpdh1</name>
    <name type="synonym">Gpdh</name>
</gene>
<accession>Q27567</accession>
<comment type="catalytic activity">
    <reaction>
        <text>sn-glycerol 3-phosphate + NAD(+) = dihydroxyacetone phosphate + NADH + H(+)</text>
        <dbReference type="Rhea" id="RHEA:11092"/>
        <dbReference type="ChEBI" id="CHEBI:15378"/>
        <dbReference type="ChEBI" id="CHEBI:57540"/>
        <dbReference type="ChEBI" id="CHEBI:57597"/>
        <dbReference type="ChEBI" id="CHEBI:57642"/>
        <dbReference type="ChEBI" id="CHEBI:57945"/>
        <dbReference type="EC" id="1.1.1.8"/>
    </reaction>
</comment>
<comment type="pathway">
    <text>Phospholipid metabolism; alpha-glycerophosphate cycle.</text>
</comment>
<comment type="subunit">
    <text evidence="1">Homodimer.</text>
</comment>
<comment type="subcellular location">
    <subcellularLocation>
        <location>Cytoplasm</location>
    </subcellularLocation>
</comment>
<comment type="similarity">
    <text evidence="2">Belongs to the NAD-dependent glycerol-3-phosphate dehydrogenase family.</text>
</comment>
<name>GPDA_DROEZ</name>
<evidence type="ECO:0000250" key="1"/>
<evidence type="ECO:0000305" key="2"/>
<protein>
    <recommendedName>
        <fullName>Glycerol-3-phosphate dehydrogenase [NAD(+)], cytoplasmic</fullName>
        <shortName>GPD-C</shortName>
        <shortName>GPDH-C</shortName>
        <ecNumber>1.1.1.8</ecNumber>
    </recommendedName>
</protein>
<dbReference type="EC" id="1.1.1.8"/>
<dbReference type="EMBL" id="D50091">
    <property type="protein sequence ID" value="BAA20288.1"/>
    <property type="molecule type" value="Genomic_DNA"/>
</dbReference>
<dbReference type="SMR" id="Q27567"/>
<dbReference type="UniPathway" id="UPA00086"/>
<dbReference type="GO" id="GO:0005829">
    <property type="term" value="C:cytosol"/>
    <property type="evidence" value="ECO:0007669"/>
    <property type="project" value="TreeGrafter"/>
</dbReference>
<dbReference type="GO" id="GO:0141152">
    <property type="term" value="F:glycerol-3-phosphate dehydrogenase (NAD+) activity"/>
    <property type="evidence" value="ECO:0007669"/>
    <property type="project" value="UniProtKB-EC"/>
</dbReference>
<dbReference type="GO" id="GO:0051287">
    <property type="term" value="F:NAD binding"/>
    <property type="evidence" value="ECO:0007669"/>
    <property type="project" value="InterPro"/>
</dbReference>
<dbReference type="GO" id="GO:0042803">
    <property type="term" value="F:protein homodimerization activity"/>
    <property type="evidence" value="ECO:0007669"/>
    <property type="project" value="InterPro"/>
</dbReference>
<dbReference type="GO" id="GO:0005975">
    <property type="term" value="P:carbohydrate metabolic process"/>
    <property type="evidence" value="ECO:0007669"/>
    <property type="project" value="InterPro"/>
</dbReference>
<dbReference type="GO" id="GO:0046168">
    <property type="term" value="P:glycerol-3-phosphate catabolic process"/>
    <property type="evidence" value="ECO:0007669"/>
    <property type="project" value="InterPro"/>
</dbReference>
<dbReference type="GO" id="GO:0006650">
    <property type="term" value="P:glycerophospholipid metabolic process"/>
    <property type="evidence" value="ECO:0007669"/>
    <property type="project" value="UniProtKB-UniPathway"/>
</dbReference>
<dbReference type="FunFam" id="1.10.1040.10:FF:000004">
    <property type="entry name" value="Glycerol-3-phosphate dehydrogenase [NAD(+)]"/>
    <property type="match status" value="1"/>
</dbReference>
<dbReference type="FunFam" id="3.40.50.720:FF:000088">
    <property type="entry name" value="Glycerol-3-phosphate dehydrogenase [NAD(+)]"/>
    <property type="match status" value="1"/>
</dbReference>
<dbReference type="Gene3D" id="1.10.1040.10">
    <property type="entry name" value="N-(1-d-carboxylethyl)-l-norvaline Dehydrogenase, domain 2"/>
    <property type="match status" value="1"/>
</dbReference>
<dbReference type="Gene3D" id="3.40.50.720">
    <property type="entry name" value="NAD(P)-binding Rossmann-like Domain"/>
    <property type="match status" value="1"/>
</dbReference>
<dbReference type="InterPro" id="IPR008927">
    <property type="entry name" value="6-PGluconate_DH-like_C_sf"/>
</dbReference>
<dbReference type="InterPro" id="IPR013328">
    <property type="entry name" value="6PGD_dom2"/>
</dbReference>
<dbReference type="InterPro" id="IPR006168">
    <property type="entry name" value="G3P_DH_NAD-dep"/>
</dbReference>
<dbReference type="InterPro" id="IPR006109">
    <property type="entry name" value="G3P_DH_NAD-dep_C"/>
</dbReference>
<dbReference type="InterPro" id="IPR017751">
    <property type="entry name" value="G3P_DH_NAD-dep_euk"/>
</dbReference>
<dbReference type="InterPro" id="IPR011128">
    <property type="entry name" value="G3P_DH_NAD-dep_N"/>
</dbReference>
<dbReference type="InterPro" id="IPR036291">
    <property type="entry name" value="NAD(P)-bd_dom_sf"/>
</dbReference>
<dbReference type="NCBIfam" id="TIGR03376">
    <property type="entry name" value="glycerol3P_DH"/>
    <property type="match status" value="1"/>
</dbReference>
<dbReference type="PANTHER" id="PTHR11728">
    <property type="entry name" value="GLYCEROL-3-PHOSPHATE DEHYDROGENASE"/>
    <property type="match status" value="1"/>
</dbReference>
<dbReference type="PANTHER" id="PTHR11728:SF8">
    <property type="entry name" value="GLYCEROL-3-PHOSPHATE DEHYDROGENASE [NAD(+)]-RELATED"/>
    <property type="match status" value="1"/>
</dbReference>
<dbReference type="Pfam" id="PF07479">
    <property type="entry name" value="NAD_Gly3P_dh_C"/>
    <property type="match status" value="1"/>
</dbReference>
<dbReference type="Pfam" id="PF01210">
    <property type="entry name" value="NAD_Gly3P_dh_N"/>
    <property type="match status" value="1"/>
</dbReference>
<dbReference type="PIRSF" id="PIRSF000114">
    <property type="entry name" value="Glycerol-3-P_dh"/>
    <property type="match status" value="1"/>
</dbReference>
<dbReference type="PRINTS" id="PR00077">
    <property type="entry name" value="GPDHDRGNASE"/>
</dbReference>
<dbReference type="SUPFAM" id="SSF48179">
    <property type="entry name" value="6-phosphogluconate dehydrogenase C-terminal domain-like"/>
    <property type="match status" value="1"/>
</dbReference>
<dbReference type="SUPFAM" id="SSF51735">
    <property type="entry name" value="NAD(P)-binding Rossmann-fold domains"/>
    <property type="match status" value="1"/>
</dbReference>
<dbReference type="PROSITE" id="PS00957">
    <property type="entry name" value="NAD_G3PDH"/>
    <property type="match status" value="1"/>
</dbReference>
<organism>
    <name type="scientific">Drosophila ezoana</name>
    <name type="common">Fruit fly</name>
    <dbReference type="NCBI Taxonomy" id="47313"/>
    <lineage>
        <taxon>Eukaryota</taxon>
        <taxon>Metazoa</taxon>
        <taxon>Ecdysozoa</taxon>
        <taxon>Arthropoda</taxon>
        <taxon>Hexapoda</taxon>
        <taxon>Insecta</taxon>
        <taxon>Pterygota</taxon>
        <taxon>Neoptera</taxon>
        <taxon>Endopterygota</taxon>
        <taxon>Diptera</taxon>
        <taxon>Brachycera</taxon>
        <taxon>Muscomorpha</taxon>
        <taxon>Ephydroidea</taxon>
        <taxon>Drosophilidae</taxon>
        <taxon>Drosophila</taxon>
    </lineage>
</organism>
<proteinExistence type="inferred from homology"/>
<reference key="1">
    <citation type="journal article" date="1995" name="Genetica">
        <title>Sequence evolution of the Gpdh gene in the Drosophila virilis species group.</title>
        <authorList>
            <person name="Tominaga H."/>
            <person name="Narise S."/>
        </authorList>
    </citation>
    <scope>NUCLEOTIDE SEQUENCE [GENOMIC DNA]</scope>
</reference>